<accession>B7KKX4</accession>
<evidence type="ECO:0000255" key="1">
    <source>
        <dbReference type="HAMAP-Rule" id="MF_01086"/>
    </source>
</evidence>
<reference key="1">
    <citation type="journal article" date="2011" name="MBio">
        <title>Novel metabolic attributes of the genus Cyanothece, comprising a group of unicellular nitrogen-fixing Cyanobacteria.</title>
        <authorList>
            <person name="Bandyopadhyay A."/>
            <person name="Elvitigala T."/>
            <person name="Welsh E."/>
            <person name="Stockel J."/>
            <person name="Liberton M."/>
            <person name="Min H."/>
            <person name="Sherman L.A."/>
            <person name="Pakrasi H.B."/>
        </authorList>
    </citation>
    <scope>NUCLEOTIDE SEQUENCE [LARGE SCALE GENOMIC DNA]</scope>
    <source>
        <strain>PCC 7424</strain>
    </source>
</reference>
<protein>
    <recommendedName>
        <fullName evidence="1">UPF0284 protein PCC7424_2681</fullName>
    </recommendedName>
</protein>
<feature type="chain" id="PRO_1000136905" description="UPF0284 protein PCC7424_2681">
    <location>
        <begin position="1"/>
        <end position="370"/>
    </location>
</feature>
<name>Y2681_GLOC7</name>
<keyword id="KW-1185">Reference proteome</keyword>
<sequence length="370" mass="39499">MISIYTQPTLAQAWLQKYQGSCPIFALILGYTQTGLIPGISAAGATPQDRQYTAIADAEFLVKGCVKTPQYPLPPLNVGVSPVYISRAVIEAFNIPIYLFNAGLPDPPSVPFIDLEGIPAHCLSSGQALPLDKVYHLYTQGVKWGEKLALIAPKSYLMIGECVVGGTTTALAVLRGLGVDAAGKVNSSHPQCNHAQKWSVVQLGLQKLGTLSDIDPFRLVAAVGDPMQIVAAGMAIAASRTIGVMLAGGTQMLAVYALIKSIISHFQERANLSQLVVGTTRWVAEDKSGDTIGLAQLIPNVPLLATQLNLNQSRYPQLQVYEQGYVKEGVGAGGCAIASYLYQGWTQQQLLNAIESLIAQSVEIKIEHNS</sequence>
<proteinExistence type="inferred from homology"/>
<organism>
    <name type="scientific">Gloeothece citriformis (strain PCC 7424)</name>
    <name type="common">Cyanothece sp. (strain PCC 7424)</name>
    <dbReference type="NCBI Taxonomy" id="65393"/>
    <lineage>
        <taxon>Bacteria</taxon>
        <taxon>Bacillati</taxon>
        <taxon>Cyanobacteriota</taxon>
        <taxon>Cyanophyceae</taxon>
        <taxon>Oscillatoriophycideae</taxon>
        <taxon>Chroococcales</taxon>
        <taxon>Aphanothecaceae</taxon>
        <taxon>Gloeothece</taxon>
        <taxon>Gloeothece citriformis</taxon>
    </lineage>
</organism>
<comment type="similarity">
    <text evidence="1">Belongs to the UPF0284 family.</text>
</comment>
<gene>
    <name type="ordered locus">PCC7424_2681</name>
</gene>
<dbReference type="EMBL" id="CP001291">
    <property type="protein sequence ID" value="ACK71093.1"/>
    <property type="molecule type" value="Genomic_DNA"/>
</dbReference>
<dbReference type="RefSeq" id="WP_015954694.1">
    <property type="nucleotide sequence ID" value="NC_011729.1"/>
</dbReference>
<dbReference type="SMR" id="B7KKX4"/>
<dbReference type="STRING" id="65393.PCC7424_2681"/>
<dbReference type="KEGG" id="cyc:PCC7424_2681"/>
<dbReference type="eggNOG" id="COG2038">
    <property type="taxonomic scope" value="Bacteria"/>
</dbReference>
<dbReference type="HOGENOM" id="CLU_053134_1_0_3"/>
<dbReference type="OrthoDB" id="418257at2"/>
<dbReference type="Proteomes" id="UP000002384">
    <property type="component" value="Chromosome"/>
</dbReference>
<dbReference type="GO" id="GO:0008939">
    <property type="term" value="F:nicotinate-nucleotide-dimethylbenzimidazole phosphoribosyltransferase activity"/>
    <property type="evidence" value="ECO:0007669"/>
    <property type="project" value="InterPro"/>
</dbReference>
<dbReference type="CDD" id="cd02439">
    <property type="entry name" value="DMB-PRT_CobT"/>
    <property type="match status" value="1"/>
</dbReference>
<dbReference type="Gene3D" id="3.40.50.10210">
    <property type="match status" value="1"/>
</dbReference>
<dbReference type="HAMAP" id="MF_01086">
    <property type="entry name" value="UPF0284"/>
    <property type="match status" value="1"/>
</dbReference>
<dbReference type="InterPro" id="IPR003200">
    <property type="entry name" value="Nict_dMeBzImd_PRibTrfase"/>
</dbReference>
<dbReference type="InterPro" id="IPR002805">
    <property type="entry name" value="Nict_dMeBzImd_PRibTrfase_arc"/>
</dbReference>
<dbReference type="InterPro" id="IPR036087">
    <property type="entry name" value="Nict_dMeBzImd_PRibTrfase_sf"/>
</dbReference>
<dbReference type="NCBIfam" id="TIGR00303">
    <property type="entry name" value="nicotinate mononucleotide-dependent phosphoribosyltransferase CobT"/>
    <property type="match status" value="1"/>
</dbReference>
<dbReference type="NCBIfam" id="NF003373">
    <property type="entry name" value="PRK04447.1-6"/>
    <property type="match status" value="1"/>
</dbReference>
<dbReference type="PANTHER" id="PTHR38811">
    <property type="match status" value="1"/>
</dbReference>
<dbReference type="PANTHER" id="PTHR38811:SF1">
    <property type="entry name" value="UPF0284 PROTEIN SLL1500"/>
    <property type="match status" value="1"/>
</dbReference>
<dbReference type="SUPFAM" id="SSF52733">
    <property type="entry name" value="Nicotinate mononucleotide:5,6-dimethylbenzimidazole phosphoribosyltransferase (CobT)"/>
    <property type="match status" value="1"/>
</dbReference>